<evidence type="ECO:0000255" key="1">
    <source>
        <dbReference type="HAMAP-Rule" id="MF_00907"/>
    </source>
</evidence>
<gene>
    <name evidence="1" type="primary">entH</name>
    <name type="ordered locus">c0684</name>
</gene>
<keyword id="KW-0963">Cytoplasm</keyword>
<keyword id="KW-0378">Hydrolase</keyword>
<keyword id="KW-1185">Reference proteome</keyword>
<proteinExistence type="inferred from homology"/>
<name>ENTH_ECOL6</name>
<reference key="1">
    <citation type="journal article" date="2002" name="Proc. Natl. Acad. Sci. U.S.A.">
        <title>Extensive mosaic structure revealed by the complete genome sequence of uropathogenic Escherichia coli.</title>
        <authorList>
            <person name="Welch R.A."/>
            <person name="Burland V."/>
            <person name="Plunkett G. III"/>
            <person name="Redford P."/>
            <person name="Roesch P."/>
            <person name="Rasko D."/>
            <person name="Buckles E.L."/>
            <person name="Liou S.-R."/>
            <person name="Boutin A."/>
            <person name="Hackett J."/>
            <person name="Stroud D."/>
            <person name="Mayhew G.F."/>
            <person name="Rose D.J."/>
            <person name="Zhou S."/>
            <person name="Schwartz D.C."/>
            <person name="Perna N.T."/>
            <person name="Mobley H.L.T."/>
            <person name="Donnenberg M.S."/>
            <person name="Blattner F.R."/>
        </authorList>
    </citation>
    <scope>NUCLEOTIDE SEQUENCE [LARGE SCALE GENOMIC DNA]</scope>
    <source>
        <strain>CFT073 / ATCC 700928 / UPEC</strain>
    </source>
</reference>
<comment type="function">
    <text evidence="1">Required for optimal enterobactin synthesis. Acts as a proofreading enzyme that prevents EntB misacylation by hydrolyzing the thioester bound existing between EntB and wrongly charged molecules.</text>
</comment>
<comment type="pathway">
    <text evidence="1">Siderophore biosynthesis; enterobactin biosynthesis.</text>
</comment>
<comment type="subunit">
    <text evidence="1">Homotetramer. Dimer of dimers. Interacts specifically with the aryl carrier protein (ArCP) domain of EntB.</text>
</comment>
<comment type="subcellular location">
    <subcellularLocation>
        <location evidence="1">Cytoplasm</location>
    </subcellularLocation>
</comment>
<comment type="similarity">
    <text evidence="1">Belongs to the thioesterase PaaI family.</text>
</comment>
<protein>
    <recommendedName>
        <fullName evidence="1">Proofreading thioesterase EntH</fullName>
        <ecNumber evidence="1">3.1.2.-</ecNumber>
    </recommendedName>
    <alternativeName>
        <fullName evidence="1">Enterobactin synthase component H</fullName>
    </alternativeName>
</protein>
<dbReference type="EC" id="3.1.2.-" evidence="1"/>
<dbReference type="EMBL" id="AE014075">
    <property type="protein sequence ID" value="AAN79159.1"/>
    <property type="molecule type" value="Genomic_DNA"/>
</dbReference>
<dbReference type="RefSeq" id="WP_000637953.1">
    <property type="nucleotide sequence ID" value="NZ_CP051263.1"/>
</dbReference>
<dbReference type="SMR" id="P0A8Y9"/>
<dbReference type="STRING" id="199310.c0684"/>
<dbReference type="GeneID" id="86863118"/>
<dbReference type="KEGG" id="ecc:c0684"/>
<dbReference type="eggNOG" id="COG2050">
    <property type="taxonomic scope" value="Bacteria"/>
</dbReference>
<dbReference type="HOGENOM" id="CLU_089876_13_1_6"/>
<dbReference type="BioCyc" id="ECOL199310:C0684-MONOMER"/>
<dbReference type="UniPathway" id="UPA00017"/>
<dbReference type="Proteomes" id="UP000001410">
    <property type="component" value="Chromosome"/>
</dbReference>
<dbReference type="GO" id="GO:0005829">
    <property type="term" value="C:cytosol"/>
    <property type="evidence" value="ECO:0007669"/>
    <property type="project" value="TreeGrafter"/>
</dbReference>
<dbReference type="GO" id="GO:0061522">
    <property type="term" value="F:1,4-dihydroxy-2-naphthoyl-CoA thioesterase activity"/>
    <property type="evidence" value="ECO:0007669"/>
    <property type="project" value="TreeGrafter"/>
</dbReference>
<dbReference type="GO" id="GO:0009239">
    <property type="term" value="P:enterobactin biosynthetic process"/>
    <property type="evidence" value="ECO:0007669"/>
    <property type="project" value="UniProtKB-UniRule"/>
</dbReference>
<dbReference type="CDD" id="cd03443">
    <property type="entry name" value="PaaI_thioesterase"/>
    <property type="match status" value="1"/>
</dbReference>
<dbReference type="FunFam" id="3.10.129.10:FF:000002">
    <property type="entry name" value="1,4-dihydroxy-2-naphthoyl-CoA hydrolase"/>
    <property type="match status" value="1"/>
</dbReference>
<dbReference type="Gene3D" id="3.10.129.10">
    <property type="entry name" value="Hotdog Thioesterase"/>
    <property type="match status" value="1"/>
</dbReference>
<dbReference type="HAMAP" id="MF_00907">
    <property type="entry name" value="Thioesterase_EntH"/>
    <property type="match status" value="1"/>
</dbReference>
<dbReference type="InterPro" id="IPR029069">
    <property type="entry name" value="HotDog_dom_sf"/>
</dbReference>
<dbReference type="InterPro" id="IPR003736">
    <property type="entry name" value="PAAI_dom"/>
</dbReference>
<dbReference type="InterPro" id="IPR026576">
    <property type="entry name" value="Thioesterase_EntH"/>
</dbReference>
<dbReference type="InterPro" id="IPR006683">
    <property type="entry name" value="Thioestr_dom"/>
</dbReference>
<dbReference type="NCBIfam" id="NF007607">
    <property type="entry name" value="PRK10254.1"/>
    <property type="match status" value="1"/>
</dbReference>
<dbReference type="NCBIfam" id="TIGR00369">
    <property type="entry name" value="unchar_dom_1"/>
    <property type="match status" value="1"/>
</dbReference>
<dbReference type="PANTHER" id="PTHR43240">
    <property type="entry name" value="1,4-DIHYDROXY-2-NAPHTHOYL-COA THIOESTERASE 1"/>
    <property type="match status" value="1"/>
</dbReference>
<dbReference type="PANTHER" id="PTHR43240:SF9">
    <property type="entry name" value="PROOFREADING THIOESTERASE ENTH"/>
    <property type="match status" value="1"/>
</dbReference>
<dbReference type="Pfam" id="PF03061">
    <property type="entry name" value="4HBT"/>
    <property type="match status" value="1"/>
</dbReference>
<dbReference type="SUPFAM" id="SSF54637">
    <property type="entry name" value="Thioesterase/thiol ester dehydrase-isomerase"/>
    <property type="match status" value="1"/>
</dbReference>
<feature type="chain" id="PRO_0000156677" description="Proofreading thioesterase EntH">
    <location>
        <begin position="1"/>
        <end position="137"/>
    </location>
</feature>
<feature type="active site" description="Nucleophile or proton acceptor" evidence="1">
    <location>
        <position position="63"/>
    </location>
</feature>
<accession>P0A8Y9</accession>
<accession>P15050</accession>
<organism>
    <name type="scientific">Escherichia coli O6:H1 (strain CFT073 / ATCC 700928 / UPEC)</name>
    <dbReference type="NCBI Taxonomy" id="199310"/>
    <lineage>
        <taxon>Bacteria</taxon>
        <taxon>Pseudomonadati</taxon>
        <taxon>Pseudomonadota</taxon>
        <taxon>Gammaproteobacteria</taxon>
        <taxon>Enterobacterales</taxon>
        <taxon>Enterobacteriaceae</taxon>
        <taxon>Escherichia</taxon>
    </lineage>
</organism>
<sequence length="137" mass="14970">MIWKRHLTLDELNATSDNTMVAHLGIVYTRLGDDVLEAEMPVDTRTHQPFGLLHGGASAALAETLGSMAGFMMTRDGQCVVGTELNATHHRPVSEGKVRGVCQPLHLGRQNQSWEIVVFDEQGRRCCTCRLGTAVLG</sequence>